<feature type="signal peptide" evidence="6">
    <location>
        <begin position="1"/>
        <end position="21"/>
    </location>
</feature>
<feature type="chain" id="PRO_0000005526" description="Clusterin">
    <location>
        <begin position="22"/>
        <end position="449"/>
    </location>
</feature>
<feature type="chain" id="PRO_0000005527" description="Clusterin beta chain" evidence="1">
    <location>
        <begin position="22"/>
        <end position="227"/>
    </location>
</feature>
<feature type="chain" id="PRO_0000005528" description="Clusterin alpha chain" evidence="1">
    <location>
        <begin position="228"/>
        <end position="449"/>
    </location>
</feature>
<feature type="short sequence motif" description="Nuclear localization signal" evidence="4">
    <location>
        <begin position="77"/>
        <end position="80"/>
    </location>
</feature>
<feature type="short sequence motif" description="Nuclear localization signal" evidence="4">
    <location>
        <begin position="443"/>
        <end position="447"/>
    </location>
</feature>
<feature type="modified residue" description="Phosphoserine" evidence="3">
    <location>
        <position position="132"/>
    </location>
</feature>
<feature type="modified residue" description="Phosphoserine" evidence="3">
    <location>
        <position position="396"/>
    </location>
</feature>
<feature type="glycosylation site" description="N-linked (GlcNAc...) asparagine" evidence="6">
    <location>
        <position position="85"/>
    </location>
</feature>
<feature type="glycosylation site" description="N-linked (GlcNAc...) asparagine" evidence="6">
    <location>
        <position position="102"/>
    </location>
</feature>
<feature type="glycosylation site" description="N-linked (GlcNAc...) asparagine" evidence="6">
    <location>
        <position position="144"/>
    </location>
</feature>
<feature type="glycosylation site" description="N-linked (GlcNAc...) asparagine" evidence="6">
    <location>
        <position position="291"/>
    </location>
</feature>
<feature type="glycosylation site" description="N-linked (GlcNAc...) asparagine" evidence="6">
    <location>
        <position position="328"/>
    </location>
</feature>
<feature type="glycosylation site" description="N-linked (GlcNAc...) asparagine" evidence="6">
    <location>
        <position position="354"/>
    </location>
</feature>
<feature type="glycosylation site" description="N-linked (GlcNAc...) asparagine" evidence="6">
    <location>
        <position position="374"/>
    </location>
</feature>
<feature type="disulfide bond" description="Interchain (between beta and alpha chains)" evidence="1">
    <location>
        <begin position="101"/>
        <end position="313"/>
    </location>
</feature>
<feature type="disulfide bond" description="Interchain (between beta and alpha chains)" evidence="1">
    <location>
        <begin position="112"/>
        <end position="305"/>
    </location>
</feature>
<feature type="disulfide bond" description="Interchain (between beta and alpha chains)" evidence="1">
    <location>
        <begin position="115"/>
        <end position="302"/>
    </location>
</feature>
<feature type="disulfide bond" description="Interchain (between beta and alpha chains)" evidence="1">
    <location>
        <begin position="120"/>
        <end position="295"/>
    </location>
</feature>
<feature type="disulfide bond" description="Interchain (between beta and alpha chains)" evidence="1">
    <location>
        <begin position="128"/>
        <end position="285"/>
    </location>
</feature>
<sequence length="449" mass="52154">MKTLLLLVGLLLTLENGQVLGDKAVSDRELQEMSTQGSNYINKEIKNALKGVKQIKNLIEQTNEERKSLLGTLEEAKKKKEGALNDTKDSEMKLKESQGVCNETMTALWEECKPCLKQTCMKFYARVCRSGSGLVGHQLEEFLNQSSPFYFWINGDRIDSLLENDRQQTHVLDVMQDSFDRASSIMDELFQDRFFTREPQDTYYYSPFSSPHRRSSLLFNPKSRFARNIMHFPMYRHLNFNDMFQPFFDMIHQAQQAMNLHLHRLPDQLPMTEFSEGDNHDRTVCKEIRHNSTGCLKMKDQCEKCQEILSVDCSTNNPSQMQLRQELNNSLQLAEKFTKLYDELLQSYQEKMLNTSSLLKQLNEQFSWVSQLANLTQGEDQYYLQVTTVSSHNSDSEVPSGLTRVVVKLFDSYPITVTVPEVVSRNNPKFMETVAEKALQEYRQKNREE</sequence>
<proteinExistence type="evidence at transcript level"/>
<accession>Q29482</accession>
<keyword id="KW-0143">Chaperone</keyword>
<keyword id="KW-0963">Cytoplasm</keyword>
<keyword id="KW-0968">Cytoplasmic vesicle</keyword>
<keyword id="KW-1015">Disulfide bond</keyword>
<keyword id="KW-0256">Endoplasmic reticulum</keyword>
<keyword id="KW-0325">Glycoprotein</keyword>
<keyword id="KW-0472">Membrane</keyword>
<keyword id="KW-0492">Microsome</keyword>
<keyword id="KW-0496">Mitochondrion</keyword>
<keyword id="KW-0539">Nucleus</keyword>
<keyword id="KW-0597">Phosphoprotein</keyword>
<keyword id="KW-1185">Reference proteome</keyword>
<keyword id="KW-0964">Secreted</keyword>
<keyword id="KW-0732">Signal</keyword>
<keyword id="KW-0832">Ubl conjugation</keyword>
<protein>
    <recommendedName>
        <fullName evidence="7">Clusterin</fullName>
    </recommendedName>
    <component>
        <recommendedName>
            <fullName>Clusterin beta chain</fullName>
        </recommendedName>
    </component>
    <component>
        <recommendedName>
            <fullName>Clusterin alpha chain</fullName>
        </recommendedName>
    </component>
</protein>
<evidence type="ECO:0000250" key="1"/>
<evidence type="ECO:0000250" key="2">
    <source>
        <dbReference type="UniProtKB" id="P05371"/>
    </source>
</evidence>
<evidence type="ECO:0000250" key="3">
    <source>
        <dbReference type="UniProtKB" id="P10909"/>
    </source>
</evidence>
<evidence type="ECO:0000250" key="4">
    <source>
        <dbReference type="UniProtKB" id="Q06890"/>
    </source>
</evidence>
<evidence type="ECO:0000250" key="5">
    <source>
        <dbReference type="UniProtKB" id="Q9XSC5"/>
    </source>
</evidence>
<evidence type="ECO:0000255" key="6"/>
<evidence type="ECO:0000303" key="7">
    <source ref="1"/>
</evidence>
<evidence type="ECO:0000305" key="8"/>
<name>CLUS_HORSE</name>
<dbReference type="EMBL" id="L46797">
    <property type="protein sequence ID" value="AAA80313.1"/>
    <property type="molecule type" value="mRNA"/>
</dbReference>
<dbReference type="RefSeq" id="NP_001075413.1">
    <property type="nucleotide sequence ID" value="NM_001081944.1"/>
</dbReference>
<dbReference type="RefSeq" id="XP_070101429.1">
    <property type="nucleotide sequence ID" value="XM_070245328.1"/>
</dbReference>
<dbReference type="RefSeq" id="XP_070101430.1">
    <property type="nucleotide sequence ID" value="XM_070245329.1"/>
</dbReference>
<dbReference type="SMR" id="Q29482"/>
<dbReference type="FunCoup" id="Q29482">
    <property type="interactions" value="323"/>
</dbReference>
<dbReference type="STRING" id="9796.ENSECAP00000005450"/>
<dbReference type="GlyCosmos" id="Q29482">
    <property type="glycosylation" value="7 sites, No reported glycans"/>
</dbReference>
<dbReference type="PaxDb" id="9796-ENSECAP00000005450"/>
<dbReference type="PeptideAtlas" id="Q29482"/>
<dbReference type="GeneID" id="100034172"/>
<dbReference type="KEGG" id="ecb:100034172"/>
<dbReference type="CTD" id="1191"/>
<dbReference type="HOGENOM" id="CLU_042162_2_0_1"/>
<dbReference type="InParanoid" id="Q29482"/>
<dbReference type="OMA" id="QGSKYIN"/>
<dbReference type="OrthoDB" id="9018825at2759"/>
<dbReference type="TreeFam" id="TF333030"/>
<dbReference type="Proteomes" id="UP000002281">
    <property type="component" value="Unplaced"/>
</dbReference>
<dbReference type="GO" id="GO:0042583">
    <property type="term" value="C:chromaffin granule"/>
    <property type="evidence" value="ECO:0007669"/>
    <property type="project" value="UniProtKB-SubCell"/>
</dbReference>
<dbReference type="GO" id="GO:0005737">
    <property type="term" value="C:cytoplasm"/>
    <property type="evidence" value="ECO:0000250"/>
    <property type="project" value="UniProtKB"/>
</dbReference>
<dbReference type="GO" id="GO:0005829">
    <property type="term" value="C:cytosol"/>
    <property type="evidence" value="ECO:0000250"/>
    <property type="project" value="UniProtKB"/>
</dbReference>
<dbReference type="GO" id="GO:0005615">
    <property type="term" value="C:extracellular space"/>
    <property type="evidence" value="ECO:0000250"/>
    <property type="project" value="UniProtKB"/>
</dbReference>
<dbReference type="GO" id="GO:0043231">
    <property type="term" value="C:intracellular membrane-bounded organelle"/>
    <property type="evidence" value="ECO:0000250"/>
    <property type="project" value="UniProtKB"/>
</dbReference>
<dbReference type="GO" id="GO:0005743">
    <property type="term" value="C:mitochondrial inner membrane"/>
    <property type="evidence" value="ECO:0000250"/>
    <property type="project" value="UniProtKB"/>
</dbReference>
<dbReference type="GO" id="GO:0005739">
    <property type="term" value="C:mitochondrion"/>
    <property type="evidence" value="ECO:0000250"/>
    <property type="project" value="UniProtKB"/>
</dbReference>
<dbReference type="GO" id="GO:0005634">
    <property type="term" value="C:nucleus"/>
    <property type="evidence" value="ECO:0000250"/>
    <property type="project" value="UniProtKB"/>
</dbReference>
<dbReference type="GO" id="GO:0099020">
    <property type="term" value="C:perinuclear endoplasmic reticulum lumen"/>
    <property type="evidence" value="ECO:0000250"/>
    <property type="project" value="UniProtKB"/>
</dbReference>
<dbReference type="GO" id="GO:0048471">
    <property type="term" value="C:perinuclear region of cytoplasm"/>
    <property type="evidence" value="ECO:0000250"/>
    <property type="project" value="UniProtKB"/>
</dbReference>
<dbReference type="GO" id="GO:0034366">
    <property type="term" value="C:spherical high-density lipoprotein particle"/>
    <property type="evidence" value="ECO:0000250"/>
    <property type="project" value="UniProtKB"/>
</dbReference>
<dbReference type="GO" id="GO:0051787">
    <property type="term" value="F:misfolded protein binding"/>
    <property type="evidence" value="ECO:0000250"/>
    <property type="project" value="UniProtKB"/>
</dbReference>
<dbReference type="GO" id="GO:0031625">
    <property type="term" value="F:ubiquitin protein ligase binding"/>
    <property type="evidence" value="ECO:0000250"/>
    <property type="project" value="UniProtKB"/>
</dbReference>
<dbReference type="GO" id="GO:0051082">
    <property type="term" value="F:unfolded protein binding"/>
    <property type="evidence" value="ECO:0000250"/>
    <property type="project" value="UniProtKB"/>
</dbReference>
<dbReference type="GO" id="GO:0061077">
    <property type="term" value="P:chaperone-mediated protein folding"/>
    <property type="evidence" value="ECO:0000250"/>
    <property type="project" value="UniProtKB"/>
</dbReference>
<dbReference type="GO" id="GO:0002434">
    <property type="term" value="P:immune complex clearance"/>
    <property type="evidence" value="ECO:0000250"/>
    <property type="project" value="UniProtKB"/>
</dbReference>
<dbReference type="GO" id="GO:0097193">
    <property type="term" value="P:intrinsic apoptotic signaling pathway"/>
    <property type="evidence" value="ECO:0000250"/>
    <property type="project" value="UniProtKB"/>
</dbReference>
<dbReference type="GO" id="GO:1905907">
    <property type="term" value="P:negative regulation of amyloid fibril formation"/>
    <property type="evidence" value="ECO:0000250"/>
    <property type="project" value="UniProtKB"/>
</dbReference>
<dbReference type="GO" id="GO:1902230">
    <property type="term" value="P:negative regulation of intrinsic apoptotic signaling pathway in response to DNA damage"/>
    <property type="evidence" value="ECO:0000250"/>
    <property type="project" value="UniProtKB"/>
</dbReference>
<dbReference type="GO" id="GO:0031333">
    <property type="term" value="P:negative regulation of protein-containing complex assembly"/>
    <property type="evidence" value="ECO:0000250"/>
    <property type="project" value="UniProtKB"/>
</dbReference>
<dbReference type="GO" id="GO:0043065">
    <property type="term" value="P:positive regulation of apoptotic process"/>
    <property type="evidence" value="ECO:0000250"/>
    <property type="project" value="UniProtKB"/>
</dbReference>
<dbReference type="GO" id="GO:2001244">
    <property type="term" value="P:positive regulation of intrinsic apoptotic signaling pathway"/>
    <property type="evidence" value="ECO:0000250"/>
    <property type="project" value="UniProtKB"/>
</dbReference>
<dbReference type="GO" id="GO:0051092">
    <property type="term" value="P:positive regulation of NF-kappaB transcription factor activity"/>
    <property type="evidence" value="ECO:0000250"/>
    <property type="project" value="UniProtKB"/>
</dbReference>
<dbReference type="GO" id="GO:0032436">
    <property type="term" value="P:positive regulation of proteasomal ubiquitin-dependent protein catabolic process"/>
    <property type="evidence" value="ECO:0000250"/>
    <property type="project" value="UniProtKB"/>
</dbReference>
<dbReference type="GO" id="GO:0048260">
    <property type="term" value="P:positive regulation of receptor-mediated endocytosis"/>
    <property type="evidence" value="ECO:0000250"/>
    <property type="project" value="UniProtKB"/>
</dbReference>
<dbReference type="GO" id="GO:2000060">
    <property type="term" value="P:positive regulation of ubiquitin-dependent protein catabolic process"/>
    <property type="evidence" value="ECO:0000250"/>
    <property type="project" value="UniProtKB"/>
</dbReference>
<dbReference type="GO" id="GO:0050821">
    <property type="term" value="P:protein stabilization"/>
    <property type="evidence" value="ECO:0000250"/>
    <property type="project" value="UniProtKB"/>
</dbReference>
<dbReference type="GO" id="GO:0042981">
    <property type="term" value="P:regulation of apoptotic process"/>
    <property type="evidence" value="ECO:0000318"/>
    <property type="project" value="GO_Central"/>
</dbReference>
<dbReference type="GO" id="GO:0042127">
    <property type="term" value="P:regulation of cell population proliferation"/>
    <property type="evidence" value="ECO:0000250"/>
    <property type="project" value="UniProtKB"/>
</dbReference>
<dbReference type="GO" id="GO:0051788">
    <property type="term" value="P:response to misfolded protein"/>
    <property type="evidence" value="ECO:0000250"/>
    <property type="project" value="UniProtKB"/>
</dbReference>
<dbReference type="InterPro" id="IPR016016">
    <property type="entry name" value="Clusterin"/>
</dbReference>
<dbReference type="InterPro" id="IPR000753">
    <property type="entry name" value="Clusterin-like"/>
</dbReference>
<dbReference type="InterPro" id="IPR016015">
    <property type="entry name" value="Clusterin_C"/>
</dbReference>
<dbReference type="InterPro" id="IPR033986">
    <property type="entry name" value="Clusterin_CS"/>
</dbReference>
<dbReference type="InterPro" id="IPR016014">
    <property type="entry name" value="Clusterin_N"/>
</dbReference>
<dbReference type="PANTHER" id="PTHR10970">
    <property type="entry name" value="CLUSTERIN"/>
    <property type="match status" value="1"/>
</dbReference>
<dbReference type="PANTHER" id="PTHR10970:SF1">
    <property type="entry name" value="CLUSTERIN"/>
    <property type="match status" value="1"/>
</dbReference>
<dbReference type="Pfam" id="PF01093">
    <property type="entry name" value="Clusterin"/>
    <property type="match status" value="1"/>
</dbReference>
<dbReference type="PIRSF" id="PIRSF002368">
    <property type="entry name" value="Clusterin"/>
    <property type="match status" value="1"/>
</dbReference>
<dbReference type="SMART" id="SM00035">
    <property type="entry name" value="CLa"/>
    <property type="match status" value="1"/>
</dbReference>
<dbReference type="SMART" id="SM00030">
    <property type="entry name" value="CLb"/>
    <property type="match status" value="1"/>
</dbReference>
<dbReference type="PROSITE" id="PS00492">
    <property type="entry name" value="CLUSTERIN_1"/>
    <property type="match status" value="1"/>
</dbReference>
<dbReference type="PROSITE" id="PS00493">
    <property type="entry name" value="CLUSTERIN_2"/>
    <property type="match status" value="1"/>
</dbReference>
<organism>
    <name type="scientific">Equus caballus</name>
    <name type="common">Horse</name>
    <dbReference type="NCBI Taxonomy" id="9796"/>
    <lineage>
        <taxon>Eukaryota</taxon>
        <taxon>Metazoa</taxon>
        <taxon>Chordata</taxon>
        <taxon>Craniata</taxon>
        <taxon>Vertebrata</taxon>
        <taxon>Euteleostomi</taxon>
        <taxon>Mammalia</taxon>
        <taxon>Eutheria</taxon>
        <taxon>Laurasiatheria</taxon>
        <taxon>Perissodactyla</taxon>
        <taxon>Equidae</taxon>
        <taxon>Equus</taxon>
    </lineage>
</organism>
<reference key="1">
    <citation type="submission" date="1995-11" db="EMBL/GenBank/DDBJ databases">
        <title>Nucleotide sequence of the complementary DNA encoding equine clusterin.</title>
        <authorList>
            <person name="Barber J.A."/>
            <person name="Farris J.A."/>
            <person name="Troedsson M.H.T."/>
            <person name="Crabo B.G."/>
            <person name="Foster D."/>
        </authorList>
    </citation>
    <scope>NUCLEOTIDE SEQUENCE [MRNA]</scope>
    <source>
        <tissue>Testis</tissue>
    </source>
</reference>
<gene>
    <name type="primary">CLU</name>
</gene>
<comment type="function">
    <text evidence="2 3 4">Functions as extracellular chaperone that prevents aggregation of non native proteins. Prevents stress-induced aggregation of blood plasma proteins. Inhibits formation of amyloid fibrils by APP, APOC2, B2M, CALCA, CSN3, SNCA and aggregation-prone LYZ variants (in vitro). Does not require ATP. Maintains partially unfolded proteins in a state appropriate for subsequent refolding by other chaperones, such as HSPA8/HSC70. Does not refold proteins by itself. Binding to cell surface receptors triggers internalization of the chaperone-client complex and subsequent lysosomal or proteasomal degradation. When secreted, protects cells against apoptosis and against cytolysis by complement: inhibits assembly of the complement membrane attack complex (MAC) by preventing polymerization of C9 pore component of the MAC complex. Intracellular forms interact with ubiquitin and SCF (SKP1-CUL1-F-box protein) E3 ubiquitin-protein ligase complexes and promote the ubiquitination and subsequent proteasomal degradation of target proteins. Promotes proteasomal degradation of COMMD1 and IKBKB. Modulates NF-kappa-B transcriptional activity (By similarity). Following stress, promotes apoptosis (By similarity). Inhibits apoptosis when associated with the mitochondrial membrane by interference with BAX-dependent release of cytochrome c into the cytoplasm. Plays a role in the regulation of cell proliferation. An intracellular form suppresses stress-induced apoptosis by stabilizing mitochondrial membrane integrity through interaction with HSPA5. Secreted form does not affect caspase or BAX-mediated intrinsic apoptosis and TNF-induced NF-kappa-B-activity (By similarity). Secreted form act as an important modulator during neuronal differentiation through interaction with STMN3 (By similarity). Plays a role in the clearance of immune complexes that arise during cell injury (By similarity).</text>
</comment>
<comment type="subunit">
    <text evidence="2 3">Antiparallel disulfide-linked heterodimer of an alpha chain and a beta chain. Self-associates and forms higher oligomers. Interacts with a broad range of misfolded proteins, including APP, APOC2 and LYZ. Slightly acidic pH promotes interaction with misfolded proteins. Forms high-molecular weight oligomers upon interaction with misfolded proteins. Interacts with APOA1, LRP2, CLUAP1 and PON1. Interacts with the complement membrane attack complex. Interacts (via alpha chain) with XRCC6. Interacts with SYVN1, COMMD1, BTRC, CUL1 and with ubiquitin and SCF (SKP1-CUL1-F-box protein) E3 ubiquitin-protein ligase complexes. Interacts (via alpha chain) with BAX in stressed cells, where BAX undergoes a conformation change leading to association with the mitochondrial membrane. Does not interact with BAX in unstressed cells. Found in a complex with LTF, CLU, EPPIN and SEMG1. Interacts (immaturely glycosylated pre-secreted form) with HSPA5; this interaction promotes CLU stability and facilitates stress-induced CLU retrotranslocation from the secretory pathway to the mitochondria, thereby reducing stress-induced apoptosis by stabilizing mitochondrial membrane integrity. Interacts with BCL2L1; this interaction releases and activates BAX and promotes cell death. Interacts with TGFBR2 and ACVR1 (By similarity). Interacts (secreted form) with STMN3; this interaction may act as an important modulator during neuronal differentiation (By similarity). Interacts with VLDLR and LRP8 (By similarity).</text>
</comment>
<comment type="subcellular location">
    <subcellularLocation>
        <location evidence="3">Secreted</location>
    </subcellularLocation>
    <subcellularLocation>
        <location evidence="3">Nucleus</location>
    </subcellularLocation>
    <subcellularLocation>
        <location evidence="3">Cytoplasm</location>
    </subcellularLocation>
    <subcellularLocation>
        <location evidence="3">Mitochondrion membrane</location>
        <topology evidence="3">Peripheral membrane protein</topology>
        <orientation evidence="3">Cytoplasmic side</orientation>
    </subcellularLocation>
    <subcellularLocation>
        <location evidence="3">Cytoplasm</location>
        <location evidence="3">Cytosol</location>
    </subcellularLocation>
    <subcellularLocation>
        <location evidence="3">Microsome</location>
    </subcellularLocation>
    <subcellularLocation>
        <location evidence="3">Endoplasmic reticulum</location>
    </subcellularLocation>
    <subcellularLocation>
        <location evidence="3">Mitochondrion</location>
    </subcellularLocation>
    <subcellularLocation>
        <location evidence="3">Mitochondrion membrane</location>
    </subcellularLocation>
    <subcellularLocation>
        <location evidence="2">Cytoplasm</location>
        <location evidence="2">Perinuclear region</location>
    </subcellularLocation>
    <subcellularLocation>
        <location evidence="5">Cytoplasmic vesicle</location>
        <location evidence="5">Secretory vesicle</location>
        <location evidence="5">Chromaffin granule</location>
    </subcellularLocation>
    <text evidence="3">Can retrotranslocate from the secretory compartments to the cytosol upon cellular stress. Detected in perinuclear foci that may be aggresomes containing misfolded, ubiquitinated proteins. Detected at the mitochondrion membrane upon induction of apoptosis. Under ER stress, a immaturely glycosylated pre-secreted form retrotranslocates from the endoplasmic reticulum (ER)-Golgi network to the cytoplasm to localize in the mitochondria through HSPA5 interaction. ER stress reduces secretion. Under the stress, minor amounts of non-secreted forms accumulate in cytoplasm.</text>
</comment>
<comment type="PTM">
    <text evidence="3">Proteolytically cleaved on its way through the secretory system, probably within the Golgi lumen. Proteolytic cleavage is not necessary for its chaperone activity. All non-secreted forms are not proteolytically cleaved. Chaperone activity of uncleaved forms is dependent on a non-reducing environment.</text>
</comment>
<comment type="PTM">
    <text evidence="3">Polyubiquitinated, leading to proteasomal degradation. Under cellular stress, the intracellular level of cleaved form is reduced due to proteasomal degradation.</text>
</comment>
<comment type="PTM">
    <text evidence="3">Heavily N-glycosylated. About 30% of the protein mass is comprised of complex N-linked carbohydrate. Endoplasmic reticulum (ER) stress induces changes in glycosylation status and increases level of hypoglycosylated forms. Core carbohydrates are essential for chaperone activity. Non-secreted forms are hypoglycosylated or unglycosylated.</text>
</comment>
<comment type="similarity">
    <text evidence="8">Belongs to the clusterin family.</text>
</comment>